<evidence type="ECO:0000255" key="1">
    <source>
        <dbReference type="HAMAP-Rule" id="MF_00031"/>
    </source>
</evidence>
<keyword id="KW-0963">Cytoplasm</keyword>
<keyword id="KW-0227">DNA damage</keyword>
<keyword id="KW-0233">DNA recombination</keyword>
<keyword id="KW-0234">DNA repair</keyword>
<keyword id="KW-0238">DNA-binding</keyword>
<keyword id="KW-1185">Reference proteome</keyword>
<comment type="function">
    <text evidence="1">The RuvA-RuvB-RuvC complex processes Holliday junction (HJ) DNA during genetic recombination and DNA repair, while the RuvA-RuvB complex plays an important role in the rescue of blocked DNA replication forks via replication fork reversal (RFR). RuvA specifically binds to HJ cruciform DNA, conferring on it an open structure. The RuvB hexamer acts as an ATP-dependent pump, pulling dsDNA into and through the RuvAB complex. HJ branch migration allows RuvC to scan DNA until it finds its consensus sequence, where it cleaves and resolves the cruciform DNA.</text>
</comment>
<comment type="subunit">
    <text evidence="1">Homotetramer. Forms an RuvA(8)-RuvB(12)-Holliday junction (HJ) complex. HJ DNA is sandwiched between 2 RuvA tetramers; dsDNA enters through RuvA and exits via RuvB. An RuvB hexamer assembles on each DNA strand where it exits the tetramer. Each RuvB hexamer is contacted by two RuvA subunits (via domain III) on 2 adjacent RuvB subunits; this complex drives branch migration. In the full resolvosome a probable DNA-RuvA(4)-RuvB(12)-RuvC(2) complex forms which resolves the HJ.</text>
</comment>
<comment type="subcellular location">
    <subcellularLocation>
        <location evidence="1">Cytoplasm</location>
    </subcellularLocation>
</comment>
<comment type="domain">
    <text evidence="1">Has three domains with a flexible linker between the domains II and III and assumes an 'L' shape. Domain III is highly mobile and contacts RuvB.</text>
</comment>
<comment type="similarity">
    <text evidence="1">Belongs to the RuvA family.</text>
</comment>
<sequence>MIASLRGTVINIGLSSAVIECNGVGYEVVTTPNTLSQLVRGEEALVLTTMVVREDAMKLYGFIDNESREMFSVLQTVSGLGPRLALACESVLSPLEISQAITNADAKTLQRVPGVGKRMADRLIVELKGKVAAFAAGVVDEGGEQISLPNANIASEVVVEQVSQALVGLGFSEKQSDDAVSFVLAADPSLDTSGALRAALAKLSGK</sequence>
<accession>Q9AE10</accession>
<feature type="chain" id="PRO_0000094626" description="Holliday junction branch migration complex subunit RuvA">
    <location>
        <begin position="1"/>
        <end position="206"/>
    </location>
</feature>
<feature type="region of interest" description="Domain I" evidence="1">
    <location>
        <begin position="1"/>
        <end position="63"/>
    </location>
</feature>
<feature type="region of interest" description="Domain II" evidence="1">
    <location>
        <begin position="64"/>
        <end position="142"/>
    </location>
</feature>
<feature type="region of interest" description="Flexible linker" evidence="1">
    <location>
        <begin position="143"/>
        <end position="153"/>
    </location>
</feature>
<feature type="region of interest" description="Domain III" evidence="1">
    <location>
        <begin position="154"/>
        <end position="206"/>
    </location>
</feature>
<name>RUVA_CORGL</name>
<organism>
    <name type="scientific">Corynebacterium glutamicum (strain ATCC 13032 / DSM 20300 / JCM 1318 / BCRC 11384 / CCUG 27702 / LMG 3730 / NBRC 12168 / NCIMB 10025 / NRRL B-2784 / 534)</name>
    <dbReference type="NCBI Taxonomy" id="196627"/>
    <lineage>
        <taxon>Bacteria</taxon>
        <taxon>Bacillati</taxon>
        <taxon>Actinomycetota</taxon>
        <taxon>Actinomycetes</taxon>
        <taxon>Mycobacteriales</taxon>
        <taxon>Corynebacteriaceae</taxon>
        <taxon>Corynebacterium</taxon>
    </lineage>
</organism>
<protein>
    <recommendedName>
        <fullName evidence="1">Holliday junction branch migration complex subunit RuvA</fullName>
    </recommendedName>
</protein>
<gene>
    <name evidence="1" type="primary">ruvA</name>
    <name type="ordered locus">Cgl1661</name>
    <name type="ordered locus">cg1870</name>
</gene>
<reference key="1">
    <citation type="submission" date="2001-02" db="EMBL/GenBank/DDBJ databases">
        <title>The role of Corynebacterium glutamicum secretion genes secD, secF and secG in transporting the Streptomyces griseus alpha-amylase.</title>
        <authorList>
            <person name="Berens S."/>
            <person name="Kalinowski J."/>
            <person name="Puehler A."/>
        </authorList>
    </citation>
    <scope>NUCLEOTIDE SEQUENCE [GENOMIC DNA]</scope>
    <source>
        <strain>ATCC 13032 / DSM 20300 / JCM 1318 / BCRC 11384 / CCUG 27702 / LMG 3730 / NBRC 12168 / NCIMB 10025 / NRRL B-2784 / 534</strain>
    </source>
</reference>
<reference key="2">
    <citation type="journal article" date="2003" name="Appl. Microbiol. Biotechnol.">
        <title>The Corynebacterium glutamicum genome: features and impacts on biotechnological processes.</title>
        <authorList>
            <person name="Ikeda M."/>
            <person name="Nakagawa S."/>
        </authorList>
    </citation>
    <scope>NUCLEOTIDE SEQUENCE [LARGE SCALE GENOMIC DNA]</scope>
    <source>
        <strain>ATCC 13032 / DSM 20300 / JCM 1318 / BCRC 11384 / CCUG 27702 / LMG 3730 / NBRC 12168 / NCIMB 10025 / NRRL B-2784 / 534</strain>
    </source>
</reference>
<reference key="3">
    <citation type="journal article" date="2003" name="J. Biotechnol.">
        <title>The complete Corynebacterium glutamicum ATCC 13032 genome sequence and its impact on the production of L-aspartate-derived amino acids and vitamins.</title>
        <authorList>
            <person name="Kalinowski J."/>
            <person name="Bathe B."/>
            <person name="Bartels D."/>
            <person name="Bischoff N."/>
            <person name="Bott M."/>
            <person name="Burkovski A."/>
            <person name="Dusch N."/>
            <person name="Eggeling L."/>
            <person name="Eikmanns B.J."/>
            <person name="Gaigalat L."/>
            <person name="Goesmann A."/>
            <person name="Hartmann M."/>
            <person name="Huthmacher K."/>
            <person name="Kraemer R."/>
            <person name="Linke B."/>
            <person name="McHardy A.C."/>
            <person name="Meyer F."/>
            <person name="Moeckel B."/>
            <person name="Pfefferle W."/>
            <person name="Puehler A."/>
            <person name="Rey D.A."/>
            <person name="Rueckert C."/>
            <person name="Rupp O."/>
            <person name="Sahm H."/>
            <person name="Wendisch V.F."/>
            <person name="Wiegraebe I."/>
            <person name="Tauch A."/>
        </authorList>
    </citation>
    <scope>NUCLEOTIDE SEQUENCE [LARGE SCALE GENOMIC DNA]</scope>
    <source>
        <strain>ATCC 13032 / DSM 20300 / JCM 1318 / BCRC 11384 / CCUG 27702 / LMG 3730 / NBRC 12168 / NCIMB 10025 / NRRL B-2784 / 534</strain>
    </source>
</reference>
<dbReference type="EMBL" id="AF038651">
    <property type="protein sequence ID" value="AAK19839.1"/>
    <property type="molecule type" value="Genomic_DNA"/>
</dbReference>
<dbReference type="EMBL" id="BA000036">
    <property type="protein sequence ID" value="BAB99054.1"/>
    <property type="molecule type" value="Genomic_DNA"/>
</dbReference>
<dbReference type="EMBL" id="BX927153">
    <property type="protein sequence ID" value="CAF20043.1"/>
    <property type="molecule type" value="Genomic_DNA"/>
</dbReference>
<dbReference type="RefSeq" id="NP_600873.1">
    <property type="nucleotide sequence ID" value="NC_003450.3"/>
</dbReference>
<dbReference type="RefSeq" id="WP_003859897.1">
    <property type="nucleotide sequence ID" value="NC_006958.1"/>
</dbReference>
<dbReference type="SMR" id="Q9AE10"/>
<dbReference type="STRING" id="196627.cg1870"/>
<dbReference type="GeneID" id="1019628"/>
<dbReference type="KEGG" id="cgb:cg1870"/>
<dbReference type="KEGG" id="cgl:Cgl1661"/>
<dbReference type="PATRIC" id="fig|196627.13.peg.1621"/>
<dbReference type="eggNOG" id="COG0632">
    <property type="taxonomic scope" value="Bacteria"/>
</dbReference>
<dbReference type="HOGENOM" id="CLU_087936_2_1_11"/>
<dbReference type="OrthoDB" id="5293449at2"/>
<dbReference type="BioCyc" id="CORYNE:G18NG-11246-MONOMER"/>
<dbReference type="Proteomes" id="UP000000582">
    <property type="component" value="Chromosome"/>
</dbReference>
<dbReference type="Proteomes" id="UP000001009">
    <property type="component" value="Chromosome"/>
</dbReference>
<dbReference type="GO" id="GO:0005737">
    <property type="term" value="C:cytoplasm"/>
    <property type="evidence" value="ECO:0007669"/>
    <property type="project" value="UniProtKB-SubCell"/>
</dbReference>
<dbReference type="GO" id="GO:0009379">
    <property type="term" value="C:Holliday junction helicase complex"/>
    <property type="evidence" value="ECO:0007669"/>
    <property type="project" value="InterPro"/>
</dbReference>
<dbReference type="GO" id="GO:0048476">
    <property type="term" value="C:Holliday junction resolvase complex"/>
    <property type="evidence" value="ECO:0007669"/>
    <property type="project" value="UniProtKB-UniRule"/>
</dbReference>
<dbReference type="GO" id="GO:0005524">
    <property type="term" value="F:ATP binding"/>
    <property type="evidence" value="ECO:0007669"/>
    <property type="project" value="InterPro"/>
</dbReference>
<dbReference type="GO" id="GO:0000400">
    <property type="term" value="F:four-way junction DNA binding"/>
    <property type="evidence" value="ECO:0007669"/>
    <property type="project" value="UniProtKB-UniRule"/>
</dbReference>
<dbReference type="GO" id="GO:0009378">
    <property type="term" value="F:four-way junction helicase activity"/>
    <property type="evidence" value="ECO:0007669"/>
    <property type="project" value="InterPro"/>
</dbReference>
<dbReference type="GO" id="GO:0006310">
    <property type="term" value="P:DNA recombination"/>
    <property type="evidence" value="ECO:0007669"/>
    <property type="project" value="UniProtKB-UniRule"/>
</dbReference>
<dbReference type="GO" id="GO:0006281">
    <property type="term" value="P:DNA repair"/>
    <property type="evidence" value="ECO:0007669"/>
    <property type="project" value="UniProtKB-UniRule"/>
</dbReference>
<dbReference type="GO" id="GO:0009432">
    <property type="term" value="P:SOS response"/>
    <property type="evidence" value="ECO:0000269"/>
    <property type="project" value="CollecTF"/>
</dbReference>
<dbReference type="CDD" id="cd14332">
    <property type="entry name" value="UBA_RuvA_C"/>
    <property type="match status" value="1"/>
</dbReference>
<dbReference type="FunFam" id="2.40.50.140:FF:000083">
    <property type="entry name" value="Holliday junction ATP-dependent DNA helicase RuvA"/>
    <property type="match status" value="1"/>
</dbReference>
<dbReference type="Gene3D" id="1.10.150.20">
    <property type="entry name" value="5' to 3' exonuclease, C-terminal subdomain"/>
    <property type="match status" value="1"/>
</dbReference>
<dbReference type="Gene3D" id="1.10.8.10">
    <property type="entry name" value="DNA helicase RuvA subunit, C-terminal domain"/>
    <property type="match status" value="1"/>
</dbReference>
<dbReference type="Gene3D" id="2.40.50.140">
    <property type="entry name" value="Nucleic acid-binding proteins"/>
    <property type="match status" value="1"/>
</dbReference>
<dbReference type="HAMAP" id="MF_00031">
    <property type="entry name" value="DNA_HJ_migration_RuvA"/>
    <property type="match status" value="1"/>
</dbReference>
<dbReference type="InterPro" id="IPR013849">
    <property type="entry name" value="DNA_helicase_Holl-junc_RuvA_I"/>
</dbReference>
<dbReference type="InterPro" id="IPR012340">
    <property type="entry name" value="NA-bd_OB-fold"/>
</dbReference>
<dbReference type="InterPro" id="IPR000085">
    <property type="entry name" value="RuvA"/>
</dbReference>
<dbReference type="InterPro" id="IPR010994">
    <property type="entry name" value="RuvA_2-like"/>
</dbReference>
<dbReference type="InterPro" id="IPR011114">
    <property type="entry name" value="RuvA_C"/>
</dbReference>
<dbReference type="InterPro" id="IPR036267">
    <property type="entry name" value="RuvA_C_sf"/>
</dbReference>
<dbReference type="NCBIfam" id="TIGR00084">
    <property type="entry name" value="ruvA"/>
    <property type="match status" value="1"/>
</dbReference>
<dbReference type="Pfam" id="PF14520">
    <property type="entry name" value="HHH_5"/>
    <property type="match status" value="1"/>
</dbReference>
<dbReference type="Pfam" id="PF07499">
    <property type="entry name" value="RuvA_C"/>
    <property type="match status" value="1"/>
</dbReference>
<dbReference type="Pfam" id="PF01330">
    <property type="entry name" value="RuvA_N"/>
    <property type="match status" value="1"/>
</dbReference>
<dbReference type="SUPFAM" id="SSF46929">
    <property type="entry name" value="DNA helicase RuvA subunit, C-terminal domain"/>
    <property type="match status" value="1"/>
</dbReference>
<dbReference type="SUPFAM" id="SSF50249">
    <property type="entry name" value="Nucleic acid-binding proteins"/>
    <property type="match status" value="1"/>
</dbReference>
<dbReference type="SUPFAM" id="SSF47781">
    <property type="entry name" value="RuvA domain 2-like"/>
    <property type="match status" value="1"/>
</dbReference>
<proteinExistence type="inferred from homology"/>